<keyword id="KW-0378">Hydrolase</keyword>
<keyword id="KW-0479">Metal-binding</keyword>
<keyword id="KW-0546">Nucleotide metabolism</keyword>
<keyword id="KW-1185">Reference proteome</keyword>
<keyword id="KW-0862">Zinc</keyword>
<proteinExistence type="inferred from homology"/>
<organism>
    <name type="scientific">Streptomyces coelicolor (strain ATCC BAA-471 / A3(2) / M145)</name>
    <dbReference type="NCBI Taxonomy" id="100226"/>
    <lineage>
        <taxon>Bacteria</taxon>
        <taxon>Bacillati</taxon>
        <taxon>Actinomycetota</taxon>
        <taxon>Actinomycetes</taxon>
        <taxon>Kitasatosporales</taxon>
        <taxon>Streptomycetaceae</taxon>
        <taxon>Streptomyces</taxon>
        <taxon>Streptomyces albidoflavus group</taxon>
    </lineage>
</organism>
<gene>
    <name type="ordered locus">SCO2546</name>
    <name type="ORF">SCC77.13c</name>
</gene>
<dbReference type="EC" id="3.5.4.2" evidence="1"/>
<dbReference type="EMBL" id="AL939113">
    <property type="protein sequence ID" value="CAB66224.1"/>
    <property type="molecule type" value="Genomic_DNA"/>
</dbReference>
<dbReference type="RefSeq" id="NP_626784.1">
    <property type="nucleotide sequence ID" value="NC_003888.3"/>
</dbReference>
<dbReference type="SMR" id="Q9RDE5"/>
<dbReference type="STRING" id="100226.gene:17760148"/>
<dbReference type="PaxDb" id="100226-SCO2546"/>
<dbReference type="KEGG" id="sco:SCO2546"/>
<dbReference type="PATRIC" id="fig|100226.15.peg.2591"/>
<dbReference type="eggNOG" id="COG1816">
    <property type="taxonomic scope" value="Bacteria"/>
</dbReference>
<dbReference type="HOGENOM" id="CLU_039228_7_0_11"/>
<dbReference type="InParanoid" id="Q9RDE5"/>
<dbReference type="OrthoDB" id="105475at2"/>
<dbReference type="PhylomeDB" id="Q9RDE5"/>
<dbReference type="Proteomes" id="UP000001973">
    <property type="component" value="Chromosome"/>
</dbReference>
<dbReference type="GO" id="GO:0000034">
    <property type="term" value="F:adenine deaminase activity"/>
    <property type="evidence" value="ECO:0000316"/>
    <property type="project" value="UniProtKB"/>
</dbReference>
<dbReference type="GO" id="GO:0008270">
    <property type="term" value="F:zinc ion binding"/>
    <property type="evidence" value="ECO:0007669"/>
    <property type="project" value="UniProtKB-UniRule"/>
</dbReference>
<dbReference type="GO" id="GO:0006146">
    <property type="term" value="P:adenine catabolic process"/>
    <property type="evidence" value="ECO:0000316"/>
    <property type="project" value="UniProtKB"/>
</dbReference>
<dbReference type="GO" id="GO:0043103">
    <property type="term" value="P:hypoxanthine salvage"/>
    <property type="evidence" value="ECO:0000318"/>
    <property type="project" value="GO_Central"/>
</dbReference>
<dbReference type="GO" id="GO:0009117">
    <property type="term" value="P:nucleotide metabolic process"/>
    <property type="evidence" value="ECO:0007669"/>
    <property type="project" value="UniProtKB-KW"/>
</dbReference>
<dbReference type="CDD" id="cd01320">
    <property type="entry name" value="ADA"/>
    <property type="match status" value="1"/>
</dbReference>
<dbReference type="FunFam" id="3.20.20.140:FF:000039">
    <property type="entry name" value="Adenine deaminase"/>
    <property type="match status" value="1"/>
</dbReference>
<dbReference type="Gene3D" id="3.20.20.140">
    <property type="entry name" value="Metal-dependent hydrolases"/>
    <property type="match status" value="1"/>
</dbReference>
<dbReference type="HAMAP" id="MF_01962">
    <property type="entry name" value="Adenine_deaminase"/>
    <property type="match status" value="1"/>
</dbReference>
<dbReference type="InterPro" id="IPR001365">
    <property type="entry name" value="A_deaminase_dom"/>
</dbReference>
<dbReference type="InterPro" id="IPR028892">
    <property type="entry name" value="ADE"/>
</dbReference>
<dbReference type="InterPro" id="IPR006330">
    <property type="entry name" value="Ado/ade_deaminase"/>
</dbReference>
<dbReference type="InterPro" id="IPR032466">
    <property type="entry name" value="Metal_Hydrolase"/>
</dbReference>
<dbReference type="NCBIfam" id="TIGR01430">
    <property type="entry name" value="aden_deam"/>
    <property type="match status" value="1"/>
</dbReference>
<dbReference type="NCBIfam" id="NF006850">
    <property type="entry name" value="PRK09358.1-6"/>
    <property type="match status" value="1"/>
</dbReference>
<dbReference type="PANTHER" id="PTHR43114">
    <property type="entry name" value="ADENINE DEAMINASE"/>
    <property type="match status" value="1"/>
</dbReference>
<dbReference type="PANTHER" id="PTHR43114:SF6">
    <property type="entry name" value="ADENINE DEAMINASE"/>
    <property type="match status" value="1"/>
</dbReference>
<dbReference type="Pfam" id="PF00962">
    <property type="entry name" value="A_deaminase"/>
    <property type="match status" value="1"/>
</dbReference>
<dbReference type="SUPFAM" id="SSF51556">
    <property type="entry name" value="Metallo-dependent hydrolases"/>
    <property type="match status" value="1"/>
</dbReference>
<accession>Q9RDE5</accession>
<comment type="function">
    <text evidence="1 2">Catalyzes the hydrolytic deamination of adenine to hypoxanthine. Plays an important role in the purine salvage pathway and in nitrogen catabolism.</text>
</comment>
<comment type="catalytic activity">
    <reaction evidence="1">
        <text>adenine + H2O + H(+) = hypoxanthine + NH4(+)</text>
        <dbReference type="Rhea" id="RHEA:23688"/>
        <dbReference type="ChEBI" id="CHEBI:15377"/>
        <dbReference type="ChEBI" id="CHEBI:15378"/>
        <dbReference type="ChEBI" id="CHEBI:16708"/>
        <dbReference type="ChEBI" id="CHEBI:17368"/>
        <dbReference type="ChEBI" id="CHEBI:28938"/>
        <dbReference type="EC" id="3.5.4.2"/>
    </reaction>
</comment>
<comment type="cofactor">
    <cofactor evidence="1">
        <name>Zn(2+)</name>
        <dbReference type="ChEBI" id="CHEBI:29105"/>
    </cofactor>
    <text evidence="1">Binds 1 zinc ion per subunit.</text>
</comment>
<comment type="similarity">
    <text evidence="1">Belongs to the metallo-dependent hydrolases superfamily. Adenosine and AMP deaminases family. Adenine deaminase type 2 subfamily.</text>
</comment>
<name>ADE_STRCO</name>
<sequence length="340" mass="37536">MKRPYDALMPLPKAELHLHIEGTLEPELAFALAARNGVSLPYADEDALREAYRFADLQSFLNLYYELMAVLRTERDFEDLADAYLARAAAQGVRHAEIFFDPQAHLARGVEMGTVVEGLWRALGASRENHGVSTRLILCFLRDESAESAMRTLDAAGPYLDRITGVGLDSAEVGHPPVKFREVYEAAAALGLRRVAHAGEEGPPAYVVEALDVLGVERIDHGLRSVEDPALVERLVRERVPLTLCPLSNVRLRTVDTLADHPLPAMLDAGLMCTVNSDDPAYFGGYAGDNFDAVRQALGLTGERLRELARNSFLASFLEDDEELRARYLAEVEAYRFPAA</sequence>
<reference key="1">
    <citation type="journal article" date="2002" name="Nature">
        <title>Complete genome sequence of the model actinomycete Streptomyces coelicolor A3(2).</title>
        <authorList>
            <person name="Bentley S.D."/>
            <person name="Chater K.F."/>
            <person name="Cerdeno-Tarraga A.-M."/>
            <person name="Challis G.L."/>
            <person name="Thomson N.R."/>
            <person name="James K.D."/>
            <person name="Harris D.E."/>
            <person name="Quail M.A."/>
            <person name="Kieser H."/>
            <person name="Harper D."/>
            <person name="Bateman A."/>
            <person name="Brown S."/>
            <person name="Chandra G."/>
            <person name="Chen C.W."/>
            <person name="Collins M."/>
            <person name="Cronin A."/>
            <person name="Fraser A."/>
            <person name="Goble A."/>
            <person name="Hidalgo J."/>
            <person name="Hornsby T."/>
            <person name="Howarth S."/>
            <person name="Huang C.-H."/>
            <person name="Kieser T."/>
            <person name="Larke L."/>
            <person name="Murphy L.D."/>
            <person name="Oliver K."/>
            <person name="O'Neil S."/>
            <person name="Rabbinowitsch E."/>
            <person name="Rajandream M.A."/>
            <person name="Rutherford K.M."/>
            <person name="Rutter S."/>
            <person name="Seeger K."/>
            <person name="Saunders D."/>
            <person name="Sharp S."/>
            <person name="Squares R."/>
            <person name="Squares S."/>
            <person name="Taylor K."/>
            <person name="Warren T."/>
            <person name="Wietzorrek A."/>
            <person name="Woodward J.R."/>
            <person name="Barrell B.G."/>
            <person name="Parkhill J."/>
            <person name="Hopwood D.A."/>
        </authorList>
    </citation>
    <scope>NUCLEOTIDE SEQUENCE [LARGE SCALE GENOMIC DNA]</scope>
    <source>
        <strain>ATCC BAA-471 / A3(2) / M145</strain>
    </source>
</reference>
<reference key="2">
    <citation type="journal article" date="2003" name="J. Mol. Biol.">
        <title>Sub-families of alpha/beta barrel enzymes: a new adenine deaminase family.</title>
        <authorList>
            <person name="Ribard C."/>
            <person name="Rochet M."/>
            <person name="Labedan B."/>
            <person name="Daignan-Fornier B."/>
            <person name="Alzari P."/>
            <person name="Scazzocchio C."/>
            <person name="Oestreicher N."/>
        </authorList>
    </citation>
    <scope>FUNCTION</scope>
</reference>
<feature type="chain" id="PRO_0000194389" description="Adenine deaminase">
    <location>
        <begin position="1"/>
        <end position="340"/>
    </location>
</feature>
<feature type="active site" description="Proton donor" evidence="1">
    <location>
        <position position="200"/>
    </location>
</feature>
<feature type="binding site" evidence="1">
    <location>
        <position position="17"/>
    </location>
    <ligand>
        <name>Zn(2+)</name>
        <dbReference type="ChEBI" id="CHEBI:29105"/>
        <note>catalytic</note>
    </ligand>
</feature>
<feature type="binding site" evidence="1">
    <location>
        <position position="19"/>
    </location>
    <ligand>
        <name>Zn(2+)</name>
        <dbReference type="ChEBI" id="CHEBI:29105"/>
        <note>catalytic</note>
    </ligand>
</feature>
<feature type="binding site" evidence="1">
    <location>
        <position position="197"/>
    </location>
    <ligand>
        <name>Zn(2+)</name>
        <dbReference type="ChEBI" id="CHEBI:29105"/>
        <note>catalytic</note>
    </ligand>
</feature>
<feature type="binding site" evidence="1">
    <location>
        <position position="278"/>
    </location>
    <ligand>
        <name>Zn(2+)</name>
        <dbReference type="ChEBI" id="CHEBI:29105"/>
        <note>catalytic</note>
    </ligand>
</feature>
<feature type="binding site" evidence="1">
    <location>
        <position position="279"/>
    </location>
    <ligand>
        <name>substrate</name>
    </ligand>
</feature>
<feature type="site" description="Important for catalytic activity" evidence="1">
    <location>
        <position position="221"/>
    </location>
</feature>
<protein>
    <recommendedName>
        <fullName evidence="1">Adenine deaminase</fullName>
        <shortName evidence="1">ADE</shortName>
        <ecNumber evidence="1">3.5.4.2</ecNumber>
    </recommendedName>
    <alternativeName>
        <fullName evidence="1">Adenine aminohydrolase</fullName>
        <shortName evidence="1">AAH</shortName>
    </alternativeName>
</protein>
<evidence type="ECO:0000255" key="1">
    <source>
        <dbReference type="HAMAP-Rule" id="MF_01962"/>
    </source>
</evidence>
<evidence type="ECO:0000269" key="2">
    <source>
    </source>
</evidence>